<reference key="1">
    <citation type="journal article" date="2009" name="PLoS Genet.">
        <title>Organised genome dynamics in the Escherichia coli species results in highly diverse adaptive paths.</title>
        <authorList>
            <person name="Touchon M."/>
            <person name="Hoede C."/>
            <person name="Tenaillon O."/>
            <person name="Barbe V."/>
            <person name="Baeriswyl S."/>
            <person name="Bidet P."/>
            <person name="Bingen E."/>
            <person name="Bonacorsi S."/>
            <person name="Bouchier C."/>
            <person name="Bouvet O."/>
            <person name="Calteau A."/>
            <person name="Chiapello H."/>
            <person name="Clermont O."/>
            <person name="Cruveiller S."/>
            <person name="Danchin A."/>
            <person name="Diard M."/>
            <person name="Dossat C."/>
            <person name="Karoui M.E."/>
            <person name="Frapy E."/>
            <person name="Garry L."/>
            <person name="Ghigo J.M."/>
            <person name="Gilles A.M."/>
            <person name="Johnson J."/>
            <person name="Le Bouguenec C."/>
            <person name="Lescat M."/>
            <person name="Mangenot S."/>
            <person name="Martinez-Jehanne V."/>
            <person name="Matic I."/>
            <person name="Nassif X."/>
            <person name="Oztas S."/>
            <person name="Petit M.A."/>
            <person name="Pichon C."/>
            <person name="Rouy Z."/>
            <person name="Ruf C.S."/>
            <person name="Schneider D."/>
            <person name="Tourret J."/>
            <person name="Vacherie B."/>
            <person name="Vallenet D."/>
            <person name="Medigue C."/>
            <person name="Rocha E.P.C."/>
            <person name="Denamur E."/>
        </authorList>
    </citation>
    <scope>NUCLEOTIDE SEQUENCE [LARGE SCALE GENOMIC DNA]</scope>
    <source>
        <strain>IAI39 / ExPEC</strain>
    </source>
</reference>
<protein>
    <recommendedName>
        <fullName evidence="1">tRNA pseudouridine synthase D</fullName>
        <ecNumber evidence="1">5.4.99.27</ecNumber>
    </recommendedName>
    <alternativeName>
        <fullName evidence="1">tRNA pseudouridine(13) synthase</fullName>
    </alternativeName>
    <alternativeName>
        <fullName evidence="1">tRNA pseudouridylate synthase D</fullName>
    </alternativeName>
    <alternativeName>
        <fullName evidence="1">tRNA-uridine isomerase D</fullName>
    </alternativeName>
</protein>
<dbReference type="EC" id="5.4.99.27" evidence="1"/>
<dbReference type="EMBL" id="CU928164">
    <property type="protein sequence ID" value="CAR19053.1"/>
    <property type="molecule type" value="Genomic_DNA"/>
</dbReference>
<dbReference type="RefSeq" id="WP_000568913.1">
    <property type="nucleotide sequence ID" value="NC_011750.1"/>
</dbReference>
<dbReference type="RefSeq" id="YP_002408865.1">
    <property type="nucleotide sequence ID" value="NC_011750.1"/>
</dbReference>
<dbReference type="SMR" id="B7NT89"/>
<dbReference type="STRING" id="585057.ECIAI39_2934"/>
<dbReference type="KEGG" id="ect:ECIAI39_2934"/>
<dbReference type="PATRIC" id="fig|585057.6.peg.3043"/>
<dbReference type="HOGENOM" id="CLU_005281_4_0_6"/>
<dbReference type="Proteomes" id="UP000000749">
    <property type="component" value="Chromosome"/>
</dbReference>
<dbReference type="GO" id="GO:0005829">
    <property type="term" value="C:cytosol"/>
    <property type="evidence" value="ECO:0007669"/>
    <property type="project" value="TreeGrafter"/>
</dbReference>
<dbReference type="GO" id="GO:0003723">
    <property type="term" value="F:RNA binding"/>
    <property type="evidence" value="ECO:0007669"/>
    <property type="project" value="InterPro"/>
</dbReference>
<dbReference type="GO" id="GO:0160150">
    <property type="term" value="F:tRNA pseudouridine(13) synthase activity"/>
    <property type="evidence" value="ECO:0007669"/>
    <property type="project" value="UniProtKB-EC"/>
</dbReference>
<dbReference type="GO" id="GO:0031119">
    <property type="term" value="P:tRNA pseudouridine synthesis"/>
    <property type="evidence" value="ECO:0007669"/>
    <property type="project" value="UniProtKB-UniRule"/>
</dbReference>
<dbReference type="CDD" id="cd02575">
    <property type="entry name" value="PseudoU_synth_EcTruD"/>
    <property type="match status" value="1"/>
</dbReference>
<dbReference type="FunFam" id="3.30.2340.10:FF:000001">
    <property type="entry name" value="tRNA pseudouridine synthase D"/>
    <property type="match status" value="1"/>
</dbReference>
<dbReference type="FunFam" id="3.30.2350.20:FF:000001">
    <property type="entry name" value="tRNA pseudouridine synthase D"/>
    <property type="match status" value="1"/>
</dbReference>
<dbReference type="Gene3D" id="3.30.2350.20">
    <property type="entry name" value="TruD, catalytic domain"/>
    <property type="match status" value="1"/>
</dbReference>
<dbReference type="Gene3D" id="3.30.2340.10">
    <property type="entry name" value="TruD, insertion domain"/>
    <property type="match status" value="1"/>
</dbReference>
<dbReference type="HAMAP" id="MF_01082">
    <property type="entry name" value="TruD"/>
    <property type="match status" value="1"/>
</dbReference>
<dbReference type="InterPro" id="IPR020103">
    <property type="entry name" value="PsdUridine_synth_cat_dom_sf"/>
</dbReference>
<dbReference type="InterPro" id="IPR001656">
    <property type="entry name" value="PsdUridine_synth_TruD"/>
</dbReference>
<dbReference type="InterPro" id="IPR020119">
    <property type="entry name" value="PsdUridine_synth_TruD_CS"/>
</dbReference>
<dbReference type="InterPro" id="IPR011760">
    <property type="entry name" value="PsdUridine_synth_TruD_insert"/>
</dbReference>
<dbReference type="InterPro" id="IPR042214">
    <property type="entry name" value="TruD_catalytic"/>
</dbReference>
<dbReference type="InterPro" id="IPR043165">
    <property type="entry name" value="TruD_insert_sf"/>
</dbReference>
<dbReference type="InterPro" id="IPR050170">
    <property type="entry name" value="TruD_pseudoU_synthase"/>
</dbReference>
<dbReference type="NCBIfam" id="NF002155">
    <property type="entry name" value="PRK00984.1-4"/>
    <property type="match status" value="1"/>
</dbReference>
<dbReference type="NCBIfam" id="TIGR00094">
    <property type="entry name" value="tRNA_TruD_broad"/>
    <property type="match status" value="1"/>
</dbReference>
<dbReference type="PANTHER" id="PTHR47811">
    <property type="entry name" value="TRNA PSEUDOURIDINE SYNTHASE D"/>
    <property type="match status" value="1"/>
</dbReference>
<dbReference type="PANTHER" id="PTHR47811:SF1">
    <property type="entry name" value="TRNA PSEUDOURIDINE SYNTHASE D"/>
    <property type="match status" value="1"/>
</dbReference>
<dbReference type="Pfam" id="PF01142">
    <property type="entry name" value="TruD"/>
    <property type="match status" value="2"/>
</dbReference>
<dbReference type="SUPFAM" id="SSF55120">
    <property type="entry name" value="Pseudouridine synthase"/>
    <property type="match status" value="1"/>
</dbReference>
<dbReference type="PROSITE" id="PS50984">
    <property type="entry name" value="TRUD"/>
    <property type="match status" value="1"/>
</dbReference>
<dbReference type="PROSITE" id="PS01268">
    <property type="entry name" value="UPF0024"/>
    <property type="match status" value="1"/>
</dbReference>
<organism>
    <name type="scientific">Escherichia coli O7:K1 (strain IAI39 / ExPEC)</name>
    <dbReference type="NCBI Taxonomy" id="585057"/>
    <lineage>
        <taxon>Bacteria</taxon>
        <taxon>Pseudomonadati</taxon>
        <taxon>Pseudomonadota</taxon>
        <taxon>Gammaproteobacteria</taxon>
        <taxon>Enterobacterales</taxon>
        <taxon>Enterobacteriaceae</taxon>
        <taxon>Escherichia</taxon>
    </lineage>
</organism>
<proteinExistence type="inferred from homology"/>
<sequence length="349" mass="39058">MIEFDNLTYLHGKPQGTGLLKANPEDFVVVEDLGFEPDGEGEHILVRILKNGCNTRFVADALAKFLKIHAREVSFAGQKDKHAVTEQWLCARVPGKEIPDLSAFQLEGCQVLEYARHKRKLRLGALKGNAFTLVLREVSNRDDVEQRLIDICVKGVPNYFGAQRFGIGGSNLQGALRWAQTNTPVRDRNKRSFWLSAARSALFNQIVAERLKKADVNQVVDGDALQLAGRGSWFVATTEELAELQRRVNDKELMITAALPGSGEWGTQREALAFEQAAVAAETELQALLVREKVEAARRAMLLYPQQLSWNWWDDVTVEIRFWLPAGSFATSVVRELINTTGDYAHIAE</sequence>
<feature type="chain" id="PRO_1000136831" description="tRNA pseudouridine synthase D">
    <location>
        <begin position="1"/>
        <end position="349"/>
    </location>
</feature>
<feature type="domain" description="TRUD" evidence="1">
    <location>
        <begin position="155"/>
        <end position="303"/>
    </location>
</feature>
<feature type="active site" description="Nucleophile" evidence="1">
    <location>
        <position position="80"/>
    </location>
</feature>
<feature type="binding site" evidence="1">
    <location>
        <position position="27"/>
    </location>
    <ligand>
        <name>substrate</name>
    </ligand>
</feature>
<feature type="binding site" evidence="1">
    <location>
        <position position="129"/>
    </location>
    <ligand>
        <name>substrate</name>
    </ligand>
</feature>
<feature type="binding site" evidence="1">
    <location>
        <position position="329"/>
    </location>
    <ligand>
        <name>substrate</name>
    </ligand>
</feature>
<accession>B7NT89</accession>
<evidence type="ECO:0000255" key="1">
    <source>
        <dbReference type="HAMAP-Rule" id="MF_01082"/>
    </source>
</evidence>
<name>TRUD_ECO7I</name>
<gene>
    <name evidence="1" type="primary">truD</name>
    <name type="ordered locus">ECIAI39_2934</name>
</gene>
<keyword id="KW-0413">Isomerase</keyword>
<keyword id="KW-0819">tRNA processing</keyword>
<comment type="function">
    <text evidence="1">Responsible for synthesis of pseudouridine from uracil-13 in transfer RNAs.</text>
</comment>
<comment type="catalytic activity">
    <reaction evidence="1">
        <text>uridine(13) in tRNA = pseudouridine(13) in tRNA</text>
        <dbReference type="Rhea" id="RHEA:42540"/>
        <dbReference type="Rhea" id="RHEA-COMP:10105"/>
        <dbReference type="Rhea" id="RHEA-COMP:10106"/>
        <dbReference type="ChEBI" id="CHEBI:65314"/>
        <dbReference type="ChEBI" id="CHEBI:65315"/>
        <dbReference type="EC" id="5.4.99.27"/>
    </reaction>
</comment>
<comment type="similarity">
    <text evidence="1">Belongs to the pseudouridine synthase TruD family.</text>
</comment>